<gene>
    <name type="ordered locus">BB_0073</name>
</gene>
<dbReference type="EMBL" id="AE000783">
    <property type="protein sequence ID" value="AAC66466.1"/>
    <property type="molecule type" value="Genomic_DNA"/>
</dbReference>
<dbReference type="PIR" id="A70109">
    <property type="entry name" value="A70109"/>
</dbReference>
<dbReference type="RefSeq" id="NP_212207.1">
    <property type="nucleotide sequence ID" value="NC_001318.1"/>
</dbReference>
<dbReference type="RefSeq" id="WP_002658284.1">
    <property type="nucleotide sequence ID" value="NC_001318.1"/>
</dbReference>
<dbReference type="SMR" id="O51100"/>
<dbReference type="STRING" id="224326.BB_0073"/>
<dbReference type="PaxDb" id="224326-BB_0073"/>
<dbReference type="EnsemblBacteria" id="AAC66466">
    <property type="protein sequence ID" value="AAC66466"/>
    <property type="gene ID" value="BB_0073"/>
</dbReference>
<dbReference type="KEGG" id="bbu:BB_0073"/>
<dbReference type="PATRIC" id="fig|224326.49.peg.471"/>
<dbReference type="HOGENOM" id="CLU_1451825_0_0_12"/>
<dbReference type="OrthoDB" id="351098at2"/>
<dbReference type="Proteomes" id="UP000001807">
    <property type="component" value="Chromosome"/>
</dbReference>
<dbReference type="GO" id="GO:0005886">
    <property type="term" value="C:plasma membrane"/>
    <property type="evidence" value="ECO:0007669"/>
    <property type="project" value="UniProtKB-SubCell"/>
</dbReference>
<name>Y073_BORBU</name>
<accession>O51100</accession>
<proteinExistence type="predicted"/>
<organism>
    <name type="scientific">Borreliella burgdorferi (strain ATCC 35210 / DSM 4680 / CIP 102532 / B31)</name>
    <name type="common">Borrelia burgdorferi</name>
    <dbReference type="NCBI Taxonomy" id="224326"/>
    <lineage>
        <taxon>Bacteria</taxon>
        <taxon>Pseudomonadati</taxon>
        <taxon>Spirochaetota</taxon>
        <taxon>Spirochaetia</taxon>
        <taxon>Spirochaetales</taxon>
        <taxon>Borreliaceae</taxon>
        <taxon>Borreliella</taxon>
    </lineage>
</organism>
<reference key="1">
    <citation type="journal article" date="1997" name="Nature">
        <title>Genomic sequence of a Lyme disease spirochaete, Borrelia burgdorferi.</title>
        <authorList>
            <person name="Fraser C.M."/>
            <person name="Casjens S."/>
            <person name="Huang W.M."/>
            <person name="Sutton G.G."/>
            <person name="Clayton R.A."/>
            <person name="Lathigra R."/>
            <person name="White O."/>
            <person name="Ketchum K.A."/>
            <person name="Dodson R.J."/>
            <person name="Hickey E.K."/>
            <person name="Gwinn M.L."/>
            <person name="Dougherty B.A."/>
            <person name="Tomb J.-F."/>
            <person name="Fleischmann R.D."/>
            <person name="Richardson D.L."/>
            <person name="Peterson J.D."/>
            <person name="Kerlavage A.R."/>
            <person name="Quackenbush J."/>
            <person name="Salzberg S.L."/>
            <person name="Hanson M."/>
            <person name="van Vugt R."/>
            <person name="Palmer N."/>
            <person name="Adams M.D."/>
            <person name="Gocayne J.D."/>
            <person name="Weidman J.F."/>
            <person name="Utterback T.R."/>
            <person name="Watthey L."/>
            <person name="McDonald L.A."/>
            <person name="Artiach P."/>
            <person name="Bowman C."/>
            <person name="Garland S.A."/>
            <person name="Fujii C."/>
            <person name="Cotton M.D."/>
            <person name="Horst K."/>
            <person name="Roberts K.M."/>
            <person name="Hatch B."/>
            <person name="Smith H.O."/>
            <person name="Venter J.C."/>
        </authorList>
    </citation>
    <scope>NUCLEOTIDE SEQUENCE [LARGE SCALE GENOMIC DNA]</scope>
    <source>
        <strain>ATCC 35210 / DSM 4680 / CIP 102532 / B31</strain>
    </source>
</reference>
<protein>
    <recommendedName>
        <fullName>Uncharacterized protein BB_0073</fullName>
    </recommendedName>
</protein>
<comment type="subcellular location">
    <subcellularLocation>
        <location evidence="2">Cell membrane</location>
        <topology evidence="2">Multi-pass membrane protein</topology>
    </subcellularLocation>
</comment>
<sequence>MTNNLIACLIINNLTLIHFVGFEDIKIKNNIMLIKRYAIITITSLLIYSISFYLYKLFAKNNLLFLVPIFYVILIYVLILLFKVLNDLFIVYNKKSNYSNDFMLSNSSLIAITFFALDKNNGFFEGLEILILSALGILIALMSITSIKKNFDKNPKINILENEPIYFFIIFILSLIPNIIILIYNQ</sequence>
<feature type="chain" id="PRO_0000174379" description="Uncharacterized protein BB_0073">
    <location>
        <begin position="1"/>
        <end position="186"/>
    </location>
</feature>
<feature type="transmembrane region" description="Helical" evidence="1">
    <location>
        <begin position="5"/>
        <end position="25"/>
    </location>
</feature>
<feature type="transmembrane region" description="Helical" evidence="1">
    <location>
        <begin position="39"/>
        <end position="59"/>
    </location>
</feature>
<feature type="transmembrane region" description="Helical" evidence="1">
    <location>
        <begin position="62"/>
        <end position="82"/>
    </location>
</feature>
<feature type="transmembrane region" description="Helical" evidence="1">
    <location>
        <begin position="122"/>
        <end position="142"/>
    </location>
</feature>
<evidence type="ECO:0000255" key="1"/>
<evidence type="ECO:0000305" key="2"/>
<keyword id="KW-1003">Cell membrane</keyword>
<keyword id="KW-0472">Membrane</keyword>
<keyword id="KW-1185">Reference proteome</keyword>
<keyword id="KW-0812">Transmembrane</keyword>
<keyword id="KW-1133">Transmembrane helix</keyword>